<reference key="1">
    <citation type="submission" date="2004-11" db="EMBL/GenBank/DDBJ databases">
        <authorList>
            <consortium name="The German cDNA consortium"/>
        </authorList>
    </citation>
    <scope>NUCLEOTIDE SEQUENCE [LARGE SCALE MRNA]</scope>
    <source>
        <tissue>Brain cortex</tissue>
    </source>
</reference>
<organism>
    <name type="scientific">Pongo abelii</name>
    <name type="common">Sumatran orangutan</name>
    <name type="synonym">Pongo pygmaeus abelii</name>
    <dbReference type="NCBI Taxonomy" id="9601"/>
    <lineage>
        <taxon>Eukaryota</taxon>
        <taxon>Metazoa</taxon>
        <taxon>Chordata</taxon>
        <taxon>Craniata</taxon>
        <taxon>Vertebrata</taxon>
        <taxon>Euteleostomi</taxon>
        <taxon>Mammalia</taxon>
        <taxon>Eutheria</taxon>
        <taxon>Euarchontoglires</taxon>
        <taxon>Primates</taxon>
        <taxon>Haplorrhini</taxon>
        <taxon>Catarrhini</taxon>
        <taxon>Hominidae</taxon>
        <taxon>Pongo</taxon>
    </lineage>
</organism>
<protein>
    <recommendedName>
        <fullName>Nuclear transcription factor Y subunit gamma</fullName>
    </recommendedName>
    <alternativeName>
        <fullName>CAAT box DNA-binding protein subunit C</fullName>
    </alternativeName>
    <alternativeName>
        <fullName>Nuclear transcription factor Y subunit C</fullName>
        <shortName>NF-YC</shortName>
    </alternativeName>
</protein>
<accession>Q5RA23</accession>
<sequence length="335" mass="37150">MSTEGGFGGTSSSDAQQSLQSFWPRVMEEIRNLTVKDFRVQELPLARIKKIMKLDEDVKMISAEAPVLFAKAAQIFITELTLRAWIHTEDNKRRTLQRNDIAMAITKFDQFDFLIDIVPRDELKPPKRQEDVRQSVTPAEPVQYYFTLAQQPAAVQVQGQQQGQQTTSSTTTIQPGQIIIAQPQQGQTTPVTMQVGEGQQVQIVQAQPQGQAQQAQSGTGQTMQVMQQIITNTGEIQQIPVQLNAGQLQYIRLAQPVSGTQVVQGQIQTLATNAQQITQTEVQQGQQQFSQFTDGQQLYQIQQVTMPAGQDLAQPMFIQSANQPSDGQAPQVTGD</sequence>
<feature type="chain" id="PRO_0000218248" description="Nuclear transcription factor Y subunit gamma">
    <location>
        <begin position="1"/>
        <end position="335"/>
    </location>
</feature>
<keyword id="KW-0010">Activator</keyword>
<keyword id="KW-0238">DNA-binding</keyword>
<keyword id="KW-0539">Nucleus</keyword>
<keyword id="KW-1185">Reference proteome</keyword>
<keyword id="KW-0804">Transcription</keyword>
<keyword id="KW-0805">Transcription regulation</keyword>
<proteinExistence type="evidence at transcript level"/>
<gene>
    <name type="primary">NFYC</name>
</gene>
<dbReference type="EMBL" id="CR859200">
    <property type="protein sequence ID" value="CAH91387.1"/>
    <property type="molecule type" value="mRNA"/>
</dbReference>
<dbReference type="RefSeq" id="NP_001125820.1">
    <property type="nucleotide sequence ID" value="NM_001132348.1"/>
</dbReference>
<dbReference type="RefSeq" id="XP_009249997.1">
    <property type="nucleotide sequence ID" value="XM_009251722.1"/>
</dbReference>
<dbReference type="SMR" id="Q5RA23"/>
<dbReference type="FunCoup" id="Q5RA23">
    <property type="interactions" value="3597"/>
</dbReference>
<dbReference type="STRING" id="9601.ENSPPYP00000001715"/>
<dbReference type="GeneID" id="100172748"/>
<dbReference type="KEGG" id="pon:100172748"/>
<dbReference type="CTD" id="4802"/>
<dbReference type="eggNOG" id="KOG1657">
    <property type="taxonomic scope" value="Eukaryota"/>
</dbReference>
<dbReference type="HOGENOM" id="CLU_045277_2_1_1"/>
<dbReference type="InParanoid" id="Q5RA23"/>
<dbReference type="OrthoDB" id="1272441at2759"/>
<dbReference type="Proteomes" id="UP000001595">
    <property type="component" value="Unplaced"/>
</dbReference>
<dbReference type="GO" id="GO:0016602">
    <property type="term" value="C:CCAAT-binding factor complex"/>
    <property type="evidence" value="ECO:0007669"/>
    <property type="project" value="TreeGrafter"/>
</dbReference>
<dbReference type="GO" id="GO:0001228">
    <property type="term" value="F:DNA-binding transcription activator activity, RNA polymerase II-specific"/>
    <property type="evidence" value="ECO:0007669"/>
    <property type="project" value="TreeGrafter"/>
</dbReference>
<dbReference type="GO" id="GO:0046982">
    <property type="term" value="F:protein heterodimerization activity"/>
    <property type="evidence" value="ECO:0007669"/>
    <property type="project" value="InterPro"/>
</dbReference>
<dbReference type="GO" id="GO:0000978">
    <property type="term" value="F:RNA polymerase II cis-regulatory region sequence-specific DNA binding"/>
    <property type="evidence" value="ECO:0007669"/>
    <property type="project" value="TreeGrafter"/>
</dbReference>
<dbReference type="CDD" id="cd22908">
    <property type="entry name" value="HFD_NFYC-like"/>
    <property type="match status" value="1"/>
</dbReference>
<dbReference type="FunFam" id="1.10.20.10:FF:000006">
    <property type="entry name" value="Nuclear transcription factor Y subunit gamma"/>
    <property type="match status" value="1"/>
</dbReference>
<dbReference type="Gene3D" id="1.10.20.10">
    <property type="entry name" value="Histone, subunit A"/>
    <property type="match status" value="1"/>
</dbReference>
<dbReference type="InterPro" id="IPR009072">
    <property type="entry name" value="Histone-fold"/>
</dbReference>
<dbReference type="InterPro" id="IPR007125">
    <property type="entry name" value="Histone_H2A/H2B/H3"/>
</dbReference>
<dbReference type="InterPro" id="IPR050568">
    <property type="entry name" value="Transcr_DNA_Rep_Reg"/>
</dbReference>
<dbReference type="PANTHER" id="PTHR10252">
    <property type="entry name" value="HISTONE-LIKE TRANSCRIPTION FACTOR CCAAT-RELATED"/>
    <property type="match status" value="1"/>
</dbReference>
<dbReference type="PANTHER" id="PTHR10252:SF8">
    <property type="entry name" value="NUCLEAR TRANSCRIPTION FACTOR Y SUBUNIT GAMMA"/>
    <property type="match status" value="1"/>
</dbReference>
<dbReference type="Pfam" id="PF00125">
    <property type="entry name" value="Histone"/>
    <property type="match status" value="1"/>
</dbReference>
<dbReference type="SUPFAM" id="SSF47113">
    <property type="entry name" value="Histone-fold"/>
    <property type="match status" value="1"/>
</dbReference>
<comment type="function">
    <text>Component of the sequence-specific heterotrimeric transcription factor (NF-Y) which specifically recognizes a 5'-CCAAT-3' box motif found in the promoters of its target genes. NF-Y can function as both an activator and a repressor, depending on its interacting cofactors.</text>
</comment>
<comment type="subunit">
    <text evidence="1">Heterotrimeric transcription factor composed of three components, NF-YA, NF-YB and NF-YC. NF-YB and NF-YC must interact and dimerize for NF-YA association and DNA binding (By similarity).</text>
</comment>
<comment type="subcellular location">
    <subcellularLocation>
        <location evidence="1">Nucleus</location>
    </subcellularLocation>
</comment>
<comment type="similarity">
    <text evidence="2">Belongs to the NFYC/HAP5 subunit family.</text>
</comment>
<name>NFYC_PONAB</name>
<evidence type="ECO:0000250" key="1"/>
<evidence type="ECO:0000305" key="2"/>